<sequence>MFKKLFGLGSKTNEETIVAPLTGAVKNIEEVPDPVFAGRMMGDGVAIDPTEGVVVSPVDGEIVQLFHTKHAIGIKAKNGTEILIHVGLETVKMEGEGFEAHVSEGQAVKAGDKLISFDLELIREKAKSTITPIVITNTDAAESIKTTVGVAATKGSTEVMKVTMK</sequence>
<feature type="chain" id="PRO_0000186544" description="PTS system glucose-specific EIIA component">
    <location>
        <begin position="1"/>
        <end position="165"/>
    </location>
</feature>
<feature type="domain" description="PTS EIIA type-1" evidence="2">
    <location>
        <begin position="33"/>
        <end position="137"/>
    </location>
</feature>
<feature type="active site" description="Tele-phosphohistidine intermediate; for EIIA activity" evidence="1 2">
    <location>
        <position position="85"/>
    </location>
</feature>
<feature type="binding site" evidence="1">
    <location>
        <position position="70"/>
    </location>
    <ligand>
        <name>Zn(2+)</name>
        <dbReference type="ChEBI" id="CHEBI:29105"/>
        <note>ligand shared with glycerol kinase</note>
    </ligand>
</feature>
<feature type="binding site" evidence="1">
    <location>
        <position position="85"/>
    </location>
    <ligand>
        <name>Zn(2+)</name>
        <dbReference type="ChEBI" id="CHEBI:29105"/>
        <note>ligand shared with glycerol kinase</note>
    </ligand>
</feature>
<feature type="site" description="Important for phospho-donor activity" evidence="1">
    <location>
        <position position="70"/>
    </location>
</feature>
<feature type="modified residue" description="Phosphohistidine; by HPr" evidence="1">
    <location>
        <position position="85"/>
    </location>
</feature>
<gene>
    <name type="primary">crr</name>
    <name type="ordered locus">BC_5320</name>
</gene>
<keyword id="KW-0963">Cytoplasm</keyword>
<keyword id="KW-0418">Kinase</keyword>
<keyword id="KW-0479">Metal-binding</keyword>
<keyword id="KW-0597">Phosphoprotein</keyword>
<keyword id="KW-0598">Phosphotransferase system</keyword>
<keyword id="KW-1185">Reference proteome</keyword>
<keyword id="KW-0762">Sugar transport</keyword>
<keyword id="KW-0808">Transferase</keyword>
<keyword id="KW-0813">Transport</keyword>
<keyword id="KW-0862">Zinc</keyword>
<evidence type="ECO:0000250" key="1">
    <source>
        <dbReference type="UniProtKB" id="P69783"/>
    </source>
</evidence>
<evidence type="ECO:0000255" key="2">
    <source>
        <dbReference type="PROSITE-ProRule" id="PRU00416"/>
    </source>
</evidence>
<evidence type="ECO:0000305" key="3"/>
<accession>Q814U8</accession>
<name>PTGA_BACCR</name>
<dbReference type="EMBL" id="AE016877">
    <property type="protein sequence ID" value="AAP12183.1"/>
    <property type="molecule type" value="Genomic_DNA"/>
</dbReference>
<dbReference type="RefSeq" id="NP_834982.1">
    <property type="nucleotide sequence ID" value="NC_004722.1"/>
</dbReference>
<dbReference type="RefSeq" id="WP_000473665.1">
    <property type="nucleotide sequence ID" value="NZ_CP138336.1"/>
</dbReference>
<dbReference type="SMR" id="Q814U8"/>
<dbReference type="STRING" id="226900.BC_5320"/>
<dbReference type="MetOSite" id="Q814U8"/>
<dbReference type="KEGG" id="bce:BC5320"/>
<dbReference type="PATRIC" id="fig|226900.8.peg.5493"/>
<dbReference type="HOGENOM" id="CLU_012312_5_3_9"/>
<dbReference type="OrthoDB" id="92465at2"/>
<dbReference type="Proteomes" id="UP000001417">
    <property type="component" value="Chromosome"/>
</dbReference>
<dbReference type="GO" id="GO:0005737">
    <property type="term" value="C:cytoplasm"/>
    <property type="evidence" value="ECO:0007669"/>
    <property type="project" value="UniProtKB-SubCell"/>
</dbReference>
<dbReference type="GO" id="GO:0016301">
    <property type="term" value="F:kinase activity"/>
    <property type="evidence" value="ECO:0000318"/>
    <property type="project" value="GO_Central"/>
</dbReference>
<dbReference type="GO" id="GO:0046872">
    <property type="term" value="F:metal ion binding"/>
    <property type="evidence" value="ECO:0007669"/>
    <property type="project" value="UniProtKB-KW"/>
</dbReference>
<dbReference type="GO" id="GO:0009401">
    <property type="term" value="P:phosphoenolpyruvate-dependent sugar phosphotransferase system"/>
    <property type="evidence" value="ECO:0000318"/>
    <property type="project" value="GO_Central"/>
</dbReference>
<dbReference type="FunFam" id="2.70.70.10:FF:000001">
    <property type="entry name" value="PTS system glucose-specific IIA component"/>
    <property type="match status" value="1"/>
</dbReference>
<dbReference type="Gene3D" id="2.70.70.10">
    <property type="entry name" value="Glucose Permease (Domain IIA)"/>
    <property type="match status" value="1"/>
</dbReference>
<dbReference type="InterPro" id="IPR011055">
    <property type="entry name" value="Dup_hybrid_motif"/>
</dbReference>
<dbReference type="InterPro" id="IPR001127">
    <property type="entry name" value="PTS_EIIA_1_perm"/>
</dbReference>
<dbReference type="InterPro" id="IPR050890">
    <property type="entry name" value="PTS_EIIA_component"/>
</dbReference>
<dbReference type="NCBIfam" id="TIGR00830">
    <property type="entry name" value="PTBA"/>
    <property type="match status" value="1"/>
</dbReference>
<dbReference type="PANTHER" id="PTHR45008">
    <property type="entry name" value="PTS SYSTEM GLUCOSE-SPECIFIC EIIA COMPONENT"/>
    <property type="match status" value="1"/>
</dbReference>
<dbReference type="PANTHER" id="PTHR45008:SF1">
    <property type="entry name" value="PTS SYSTEM GLUCOSE-SPECIFIC EIIA COMPONENT"/>
    <property type="match status" value="1"/>
</dbReference>
<dbReference type="Pfam" id="PF00358">
    <property type="entry name" value="PTS_EIIA_1"/>
    <property type="match status" value="1"/>
</dbReference>
<dbReference type="SUPFAM" id="SSF51261">
    <property type="entry name" value="Duplicated hybrid motif"/>
    <property type="match status" value="1"/>
</dbReference>
<dbReference type="PROSITE" id="PS51093">
    <property type="entry name" value="PTS_EIIA_TYPE_1"/>
    <property type="match status" value="1"/>
</dbReference>
<dbReference type="PROSITE" id="PS00371">
    <property type="entry name" value="PTS_EIIA_TYPE_1_HIS"/>
    <property type="match status" value="1"/>
</dbReference>
<comment type="function">
    <text evidence="1">The phosphoenolpyruvate-dependent sugar phosphotransferase system (sugar PTS), a major carbohydrate active transport system, catalyzes the phosphorylation of incoming sugar substrates concomitantly with their translocation across the cell membrane. The enzyme II complex composed of PtsG and Crr is involved in glucose transport.</text>
</comment>
<comment type="cofactor">
    <cofactor evidence="1">
        <name>Zn(2+)</name>
        <dbReference type="ChEBI" id="CHEBI:29105"/>
    </cofactor>
    <text evidence="1">Binds 1 zinc ion per glycerol kinase EIIA-Glc dimer. The zinc ion is important for dimerization.</text>
</comment>
<comment type="subunit">
    <text evidence="1">Heterodimer with glycerol kinase (glpk).</text>
</comment>
<comment type="subcellular location">
    <subcellularLocation>
        <location evidence="3">Cytoplasm</location>
    </subcellularLocation>
</comment>
<comment type="domain">
    <text evidence="2">The EIIA domain is phosphorylated by phospho-HPr on a histidyl residue. Then, it transfers the phosphoryl group to the EIIB domain.</text>
</comment>
<proteinExistence type="inferred from homology"/>
<protein>
    <recommendedName>
        <fullName evidence="1">PTS system glucose-specific EIIA component</fullName>
    </recommendedName>
    <alternativeName>
        <fullName evidence="1">EIIA-Glc</fullName>
    </alternativeName>
    <alternativeName>
        <fullName evidence="1">EIII-Glc</fullName>
    </alternativeName>
    <alternativeName>
        <fullName evidence="1">Glucose-specific phosphotransferase enzyme IIA component</fullName>
    </alternativeName>
</protein>
<organism>
    <name type="scientific">Bacillus cereus (strain ATCC 14579 / DSM 31 / CCUG 7414 / JCM 2152 / NBRC 15305 / NCIMB 9373 / NCTC 2599 / NRRL B-3711)</name>
    <dbReference type="NCBI Taxonomy" id="226900"/>
    <lineage>
        <taxon>Bacteria</taxon>
        <taxon>Bacillati</taxon>
        <taxon>Bacillota</taxon>
        <taxon>Bacilli</taxon>
        <taxon>Bacillales</taxon>
        <taxon>Bacillaceae</taxon>
        <taxon>Bacillus</taxon>
        <taxon>Bacillus cereus group</taxon>
    </lineage>
</organism>
<reference key="1">
    <citation type="journal article" date="2003" name="Nature">
        <title>Genome sequence of Bacillus cereus and comparative analysis with Bacillus anthracis.</title>
        <authorList>
            <person name="Ivanova N."/>
            <person name="Sorokin A."/>
            <person name="Anderson I."/>
            <person name="Galleron N."/>
            <person name="Candelon B."/>
            <person name="Kapatral V."/>
            <person name="Bhattacharyya A."/>
            <person name="Reznik G."/>
            <person name="Mikhailova N."/>
            <person name="Lapidus A."/>
            <person name="Chu L."/>
            <person name="Mazur M."/>
            <person name="Goltsman E."/>
            <person name="Larsen N."/>
            <person name="D'Souza M."/>
            <person name="Walunas T."/>
            <person name="Grechkin Y."/>
            <person name="Pusch G."/>
            <person name="Haselkorn R."/>
            <person name="Fonstein M."/>
            <person name="Ehrlich S.D."/>
            <person name="Overbeek R."/>
            <person name="Kyrpides N.C."/>
        </authorList>
    </citation>
    <scope>NUCLEOTIDE SEQUENCE [LARGE SCALE GENOMIC DNA]</scope>
    <source>
        <strain>ATCC 14579 / DSM 31 / CCUG 7414 / JCM 2152 / NBRC 15305 / NCIMB 9373 / NCTC 2599 / NRRL B-3711</strain>
    </source>
</reference>